<reference key="1">
    <citation type="submission" date="2007-09" db="EMBL/GenBank/DDBJ databases">
        <title>Complete sequence of chromosome of Serratia proteamaculans 568.</title>
        <authorList>
            <consortium name="US DOE Joint Genome Institute"/>
            <person name="Copeland A."/>
            <person name="Lucas S."/>
            <person name="Lapidus A."/>
            <person name="Barry K."/>
            <person name="Glavina del Rio T."/>
            <person name="Dalin E."/>
            <person name="Tice H."/>
            <person name="Pitluck S."/>
            <person name="Chain P."/>
            <person name="Malfatti S."/>
            <person name="Shin M."/>
            <person name="Vergez L."/>
            <person name="Schmutz J."/>
            <person name="Larimer F."/>
            <person name="Land M."/>
            <person name="Hauser L."/>
            <person name="Kyrpides N."/>
            <person name="Kim E."/>
            <person name="Taghavi S."/>
            <person name="Newman L."/>
            <person name="Vangronsveld J."/>
            <person name="van der Lelie D."/>
            <person name="Richardson P."/>
        </authorList>
    </citation>
    <scope>NUCLEOTIDE SEQUENCE [LARGE SCALE GENOMIC DNA]</scope>
    <source>
        <strain>568</strain>
    </source>
</reference>
<accession>A8GH95</accession>
<evidence type="ECO:0000255" key="1">
    <source>
        <dbReference type="HAMAP-Rule" id="MF_01959"/>
    </source>
</evidence>
<evidence type="ECO:0000256" key="2">
    <source>
        <dbReference type="SAM" id="MobiDB-lite"/>
    </source>
</evidence>
<gene>
    <name evidence="1" type="primary">ccmE</name>
    <name evidence="1" type="synonym">cycJ</name>
    <name type="ordered locus">Spro_3387</name>
</gene>
<dbReference type="EMBL" id="CP000826">
    <property type="protein sequence ID" value="ABV42485.1"/>
    <property type="molecule type" value="Genomic_DNA"/>
</dbReference>
<dbReference type="SMR" id="A8GH95"/>
<dbReference type="STRING" id="399741.Spro_3387"/>
<dbReference type="KEGG" id="spe:Spro_3387"/>
<dbReference type="eggNOG" id="COG2332">
    <property type="taxonomic scope" value="Bacteria"/>
</dbReference>
<dbReference type="HOGENOM" id="CLU_079503_1_0_6"/>
<dbReference type="OrthoDB" id="9793584at2"/>
<dbReference type="GO" id="GO:0005886">
    <property type="term" value="C:plasma membrane"/>
    <property type="evidence" value="ECO:0007669"/>
    <property type="project" value="UniProtKB-SubCell"/>
</dbReference>
<dbReference type="GO" id="GO:0020037">
    <property type="term" value="F:heme binding"/>
    <property type="evidence" value="ECO:0007669"/>
    <property type="project" value="InterPro"/>
</dbReference>
<dbReference type="GO" id="GO:0046872">
    <property type="term" value="F:metal ion binding"/>
    <property type="evidence" value="ECO:0007669"/>
    <property type="project" value="UniProtKB-KW"/>
</dbReference>
<dbReference type="GO" id="GO:0017004">
    <property type="term" value="P:cytochrome complex assembly"/>
    <property type="evidence" value="ECO:0007669"/>
    <property type="project" value="UniProtKB-KW"/>
</dbReference>
<dbReference type="FunFam" id="2.40.50.140:FF:000104">
    <property type="entry name" value="Cytochrome c-type biogenesis protein CcmE"/>
    <property type="match status" value="1"/>
</dbReference>
<dbReference type="Gene3D" id="2.40.50.140">
    <property type="entry name" value="Nucleic acid-binding proteins"/>
    <property type="match status" value="1"/>
</dbReference>
<dbReference type="HAMAP" id="MF_01959">
    <property type="entry name" value="CcmE"/>
    <property type="match status" value="1"/>
</dbReference>
<dbReference type="InterPro" id="IPR004329">
    <property type="entry name" value="CcmE"/>
</dbReference>
<dbReference type="InterPro" id="IPR036127">
    <property type="entry name" value="CcmE-like_sf"/>
</dbReference>
<dbReference type="InterPro" id="IPR012340">
    <property type="entry name" value="NA-bd_OB-fold"/>
</dbReference>
<dbReference type="NCBIfam" id="NF009638">
    <property type="entry name" value="PRK13165.1"/>
    <property type="match status" value="1"/>
</dbReference>
<dbReference type="NCBIfam" id="NF009727">
    <property type="entry name" value="PRK13254.1-1"/>
    <property type="match status" value="1"/>
</dbReference>
<dbReference type="NCBIfam" id="NF009729">
    <property type="entry name" value="PRK13254.1-3"/>
    <property type="match status" value="1"/>
</dbReference>
<dbReference type="NCBIfam" id="NF009731">
    <property type="entry name" value="PRK13254.1-5"/>
    <property type="match status" value="1"/>
</dbReference>
<dbReference type="PANTHER" id="PTHR34128">
    <property type="entry name" value="CYTOCHROME C-TYPE BIOGENESIS PROTEIN CCME HOMOLOG, MITOCHONDRIAL"/>
    <property type="match status" value="1"/>
</dbReference>
<dbReference type="PANTHER" id="PTHR34128:SF2">
    <property type="entry name" value="CYTOCHROME C-TYPE BIOGENESIS PROTEIN CCME HOMOLOG, MITOCHONDRIAL"/>
    <property type="match status" value="1"/>
</dbReference>
<dbReference type="Pfam" id="PF03100">
    <property type="entry name" value="CcmE"/>
    <property type="match status" value="1"/>
</dbReference>
<dbReference type="SUPFAM" id="SSF82093">
    <property type="entry name" value="Heme chaperone CcmE"/>
    <property type="match status" value="1"/>
</dbReference>
<protein>
    <recommendedName>
        <fullName evidence="1">Cytochrome c-type biogenesis protein CcmE</fullName>
    </recommendedName>
    <alternativeName>
        <fullName evidence="1">Cytochrome c maturation protein E</fullName>
    </alternativeName>
    <alternativeName>
        <fullName evidence="1">Heme chaperone CcmE</fullName>
    </alternativeName>
</protein>
<name>CCME_SERP5</name>
<feature type="chain" id="PRO_1000070850" description="Cytochrome c-type biogenesis protein CcmE">
    <location>
        <begin position="1"/>
        <end position="164"/>
    </location>
</feature>
<feature type="topological domain" description="Cytoplasmic" evidence="1">
    <location>
        <begin position="1"/>
        <end position="8"/>
    </location>
</feature>
<feature type="transmembrane region" description="Helical; Signal-anchor for type II membrane protein" evidence="1">
    <location>
        <begin position="9"/>
        <end position="29"/>
    </location>
</feature>
<feature type="topological domain" description="Periplasmic" evidence="1">
    <location>
        <begin position="30"/>
        <end position="164"/>
    </location>
</feature>
<feature type="region of interest" description="Disordered" evidence="2">
    <location>
        <begin position="131"/>
        <end position="164"/>
    </location>
</feature>
<feature type="compositionally biased region" description="Basic and acidic residues" evidence="2">
    <location>
        <begin position="131"/>
        <end position="148"/>
    </location>
</feature>
<feature type="compositionally biased region" description="Polar residues" evidence="2">
    <location>
        <begin position="155"/>
        <end position="164"/>
    </location>
</feature>
<feature type="binding site" description="covalent" evidence="1">
    <location>
        <position position="130"/>
    </location>
    <ligand>
        <name>heme</name>
        <dbReference type="ChEBI" id="CHEBI:30413"/>
    </ligand>
</feature>
<feature type="binding site" description="axial binding residue" evidence="1">
    <location>
        <position position="134"/>
    </location>
    <ligand>
        <name>heme</name>
        <dbReference type="ChEBI" id="CHEBI:30413"/>
    </ligand>
    <ligandPart>
        <name>Fe</name>
        <dbReference type="ChEBI" id="CHEBI:18248"/>
    </ligandPart>
</feature>
<sequence length="164" mass="17910">MNPRRKSRLYLAIVVLIGVALTATLMLYALRSNIDLFYTPSEILQGKGENHEKPEVGQRLRIGGMVMPGSVKRDQKTLQVSFKVYDARGAIDVTYTGILPDLFREGQGVVAQGVLGEGNVVNAREVLAKHDEKYTPPEVADAMKENHKGPASAYATPQNEGAKS</sequence>
<comment type="function">
    <text evidence="1">Heme chaperone required for the biogenesis of c-type cytochromes. Transiently binds heme delivered by CcmC and transfers the heme to apo-cytochromes in a process facilitated by CcmF and CcmH.</text>
</comment>
<comment type="subcellular location">
    <subcellularLocation>
        <location evidence="1">Cell inner membrane</location>
        <topology evidence="1">Single-pass type II membrane protein</topology>
        <orientation evidence="1">Periplasmic side</orientation>
    </subcellularLocation>
</comment>
<comment type="similarity">
    <text evidence="1">Belongs to the CcmE/CycJ family.</text>
</comment>
<proteinExistence type="inferred from homology"/>
<organism>
    <name type="scientific">Serratia proteamaculans (strain 568)</name>
    <dbReference type="NCBI Taxonomy" id="399741"/>
    <lineage>
        <taxon>Bacteria</taxon>
        <taxon>Pseudomonadati</taxon>
        <taxon>Pseudomonadota</taxon>
        <taxon>Gammaproteobacteria</taxon>
        <taxon>Enterobacterales</taxon>
        <taxon>Yersiniaceae</taxon>
        <taxon>Serratia</taxon>
    </lineage>
</organism>
<keyword id="KW-0997">Cell inner membrane</keyword>
<keyword id="KW-1003">Cell membrane</keyword>
<keyword id="KW-0201">Cytochrome c-type biogenesis</keyword>
<keyword id="KW-0349">Heme</keyword>
<keyword id="KW-0408">Iron</keyword>
<keyword id="KW-0472">Membrane</keyword>
<keyword id="KW-0479">Metal-binding</keyword>
<keyword id="KW-0735">Signal-anchor</keyword>
<keyword id="KW-0812">Transmembrane</keyword>
<keyword id="KW-1133">Transmembrane helix</keyword>